<protein>
    <recommendedName>
        <fullName evidence="1">tRNA-specific 2-thiouridylase MnmA</fullName>
        <ecNumber evidence="1">2.8.1.13</ecNumber>
    </recommendedName>
</protein>
<dbReference type="EC" id="2.8.1.13" evidence="1"/>
<dbReference type="EMBL" id="CP000721">
    <property type="protein sequence ID" value="ABR33282.1"/>
    <property type="molecule type" value="Genomic_DNA"/>
</dbReference>
<dbReference type="RefSeq" id="WP_011968441.1">
    <property type="nucleotide sequence ID" value="NC_009617.1"/>
</dbReference>
<dbReference type="SMR" id="A6LSF2"/>
<dbReference type="KEGG" id="cbe:Cbei_1100"/>
<dbReference type="eggNOG" id="COG0482">
    <property type="taxonomic scope" value="Bacteria"/>
</dbReference>
<dbReference type="HOGENOM" id="CLU_035188_0_0_9"/>
<dbReference type="Proteomes" id="UP000000565">
    <property type="component" value="Chromosome"/>
</dbReference>
<dbReference type="GO" id="GO:0005737">
    <property type="term" value="C:cytoplasm"/>
    <property type="evidence" value="ECO:0007669"/>
    <property type="project" value="UniProtKB-SubCell"/>
</dbReference>
<dbReference type="GO" id="GO:0005524">
    <property type="term" value="F:ATP binding"/>
    <property type="evidence" value="ECO:0007669"/>
    <property type="project" value="UniProtKB-KW"/>
</dbReference>
<dbReference type="GO" id="GO:0000049">
    <property type="term" value="F:tRNA binding"/>
    <property type="evidence" value="ECO:0007669"/>
    <property type="project" value="UniProtKB-KW"/>
</dbReference>
<dbReference type="GO" id="GO:0103016">
    <property type="term" value="F:tRNA-uridine 2-sulfurtransferase activity"/>
    <property type="evidence" value="ECO:0007669"/>
    <property type="project" value="UniProtKB-EC"/>
</dbReference>
<dbReference type="GO" id="GO:0002143">
    <property type="term" value="P:tRNA wobble position uridine thiolation"/>
    <property type="evidence" value="ECO:0007669"/>
    <property type="project" value="TreeGrafter"/>
</dbReference>
<dbReference type="CDD" id="cd01998">
    <property type="entry name" value="MnmA_TRMU-like"/>
    <property type="match status" value="1"/>
</dbReference>
<dbReference type="FunFam" id="2.30.30.280:FF:000001">
    <property type="entry name" value="tRNA-specific 2-thiouridylase MnmA"/>
    <property type="match status" value="1"/>
</dbReference>
<dbReference type="FunFam" id="2.40.30.10:FF:000023">
    <property type="entry name" value="tRNA-specific 2-thiouridylase MnmA"/>
    <property type="match status" value="1"/>
</dbReference>
<dbReference type="FunFam" id="3.40.50.620:FF:000115">
    <property type="entry name" value="tRNA-specific 2-thiouridylase MnmA"/>
    <property type="match status" value="1"/>
</dbReference>
<dbReference type="Gene3D" id="2.30.30.280">
    <property type="entry name" value="Adenine nucleotide alpha hydrolases-like domains"/>
    <property type="match status" value="1"/>
</dbReference>
<dbReference type="Gene3D" id="3.40.50.620">
    <property type="entry name" value="HUPs"/>
    <property type="match status" value="1"/>
</dbReference>
<dbReference type="Gene3D" id="2.40.30.10">
    <property type="entry name" value="Translation factors"/>
    <property type="match status" value="1"/>
</dbReference>
<dbReference type="HAMAP" id="MF_00144">
    <property type="entry name" value="tRNA_thiouridyl_MnmA"/>
    <property type="match status" value="1"/>
</dbReference>
<dbReference type="InterPro" id="IPR004506">
    <property type="entry name" value="MnmA-like"/>
</dbReference>
<dbReference type="InterPro" id="IPR046885">
    <property type="entry name" value="MnmA-like_C"/>
</dbReference>
<dbReference type="InterPro" id="IPR046884">
    <property type="entry name" value="MnmA-like_central"/>
</dbReference>
<dbReference type="InterPro" id="IPR023382">
    <property type="entry name" value="MnmA-like_central_sf"/>
</dbReference>
<dbReference type="InterPro" id="IPR014729">
    <property type="entry name" value="Rossmann-like_a/b/a_fold"/>
</dbReference>
<dbReference type="NCBIfam" id="NF001138">
    <property type="entry name" value="PRK00143.1"/>
    <property type="match status" value="1"/>
</dbReference>
<dbReference type="NCBIfam" id="TIGR00420">
    <property type="entry name" value="trmU"/>
    <property type="match status" value="1"/>
</dbReference>
<dbReference type="PANTHER" id="PTHR11933:SF5">
    <property type="entry name" value="MITOCHONDRIAL TRNA-SPECIFIC 2-THIOURIDYLASE 1"/>
    <property type="match status" value="1"/>
</dbReference>
<dbReference type="PANTHER" id="PTHR11933">
    <property type="entry name" value="TRNA 5-METHYLAMINOMETHYL-2-THIOURIDYLATE -METHYLTRANSFERASE"/>
    <property type="match status" value="1"/>
</dbReference>
<dbReference type="Pfam" id="PF03054">
    <property type="entry name" value="tRNA_Me_trans"/>
    <property type="match status" value="1"/>
</dbReference>
<dbReference type="Pfam" id="PF20258">
    <property type="entry name" value="tRNA_Me_trans_C"/>
    <property type="match status" value="1"/>
</dbReference>
<dbReference type="Pfam" id="PF20259">
    <property type="entry name" value="tRNA_Me_trans_M"/>
    <property type="match status" value="1"/>
</dbReference>
<dbReference type="SUPFAM" id="SSF52402">
    <property type="entry name" value="Adenine nucleotide alpha hydrolases-like"/>
    <property type="match status" value="1"/>
</dbReference>
<reference key="1">
    <citation type="submission" date="2007-06" db="EMBL/GenBank/DDBJ databases">
        <title>Complete sequence of Clostridium beijerinckii NCIMB 8052.</title>
        <authorList>
            <consortium name="US DOE Joint Genome Institute"/>
            <person name="Copeland A."/>
            <person name="Lucas S."/>
            <person name="Lapidus A."/>
            <person name="Barry K."/>
            <person name="Detter J.C."/>
            <person name="Glavina del Rio T."/>
            <person name="Hammon N."/>
            <person name="Israni S."/>
            <person name="Dalin E."/>
            <person name="Tice H."/>
            <person name="Pitluck S."/>
            <person name="Sims D."/>
            <person name="Brettin T."/>
            <person name="Bruce D."/>
            <person name="Tapia R."/>
            <person name="Brainard J."/>
            <person name="Schmutz J."/>
            <person name="Larimer F."/>
            <person name="Land M."/>
            <person name="Hauser L."/>
            <person name="Kyrpides N."/>
            <person name="Mikhailova N."/>
            <person name="Bennet G."/>
            <person name="Cann I."/>
            <person name="Chen J.-S."/>
            <person name="Contreras A.L."/>
            <person name="Jones D."/>
            <person name="Kashket E."/>
            <person name="Mitchell W."/>
            <person name="Stoddard S."/>
            <person name="Schwarz W."/>
            <person name="Qureshi N."/>
            <person name="Young M."/>
            <person name="Shi Z."/>
            <person name="Ezeji T."/>
            <person name="White B."/>
            <person name="Blaschek H."/>
            <person name="Richardson P."/>
        </authorList>
    </citation>
    <scope>NUCLEOTIDE SEQUENCE [LARGE SCALE GENOMIC DNA]</scope>
    <source>
        <strain>ATCC 51743 / NCIMB 8052</strain>
    </source>
</reference>
<name>MNMA_CLOB8</name>
<comment type="function">
    <text evidence="1">Catalyzes the 2-thiolation of uridine at the wobble position (U34) of tRNA, leading to the formation of s(2)U34.</text>
</comment>
<comment type="catalytic activity">
    <reaction evidence="1">
        <text>S-sulfanyl-L-cysteinyl-[protein] + uridine(34) in tRNA + AH2 + ATP = 2-thiouridine(34) in tRNA + L-cysteinyl-[protein] + A + AMP + diphosphate + H(+)</text>
        <dbReference type="Rhea" id="RHEA:47032"/>
        <dbReference type="Rhea" id="RHEA-COMP:10131"/>
        <dbReference type="Rhea" id="RHEA-COMP:11726"/>
        <dbReference type="Rhea" id="RHEA-COMP:11727"/>
        <dbReference type="Rhea" id="RHEA-COMP:11728"/>
        <dbReference type="ChEBI" id="CHEBI:13193"/>
        <dbReference type="ChEBI" id="CHEBI:15378"/>
        <dbReference type="ChEBI" id="CHEBI:17499"/>
        <dbReference type="ChEBI" id="CHEBI:29950"/>
        <dbReference type="ChEBI" id="CHEBI:30616"/>
        <dbReference type="ChEBI" id="CHEBI:33019"/>
        <dbReference type="ChEBI" id="CHEBI:61963"/>
        <dbReference type="ChEBI" id="CHEBI:65315"/>
        <dbReference type="ChEBI" id="CHEBI:87170"/>
        <dbReference type="ChEBI" id="CHEBI:456215"/>
        <dbReference type="EC" id="2.8.1.13"/>
    </reaction>
</comment>
<comment type="subcellular location">
    <subcellularLocation>
        <location evidence="1">Cytoplasm</location>
    </subcellularLocation>
</comment>
<comment type="similarity">
    <text evidence="1">Belongs to the MnmA/TRMU family.</text>
</comment>
<feature type="chain" id="PRO_0000349583" description="tRNA-specific 2-thiouridylase MnmA">
    <location>
        <begin position="1"/>
        <end position="358"/>
    </location>
</feature>
<feature type="region of interest" description="Interaction with tRNA" evidence="1">
    <location>
        <begin position="149"/>
        <end position="151"/>
    </location>
</feature>
<feature type="region of interest" description="Interaction with tRNA" evidence="1">
    <location>
        <begin position="305"/>
        <end position="306"/>
    </location>
</feature>
<feature type="active site" description="Nucleophile" evidence="1">
    <location>
        <position position="103"/>
    </location>
</feature>
<feature type="active site" description="Cysteine persulfide intermediate" evidence="1">
    <location>
        <position position="199"/>
    </location>
</feature>
<feature type="binding site" evidence="1">
    <location>
        <begin position="8"/>
        <end position="15"/>
    </location>
    <ligand>
        <name>ATP</name>
        <dbReference type="ChEBI" id="CHEBI:30616"/>
    </ligand>
</feature>
<feature type="binding site" evidence="1">
    <location>
        <position position="34"/>
    </location>
    <ligand>
        <name>ATP</name>
        <dbReference type="ChEBI" id="CHEBI:30616"/>
    </ligand>
</feature>
<feature type="binding site" evidence="1">
    <location>
        <position position="127"/>
    </location>
    <ligand>
        <name>ATP</name>
        <dbReference type="ChEBI" id="CHEBI:30616"/>
    </ligand>
</feature>
<feature type="site" description="Interaction with tRNA" evidence="1">
    <location>
        <position position="128"/>
    </location>
</feature>
<feature type="site" description="Interaction with tRNA" evidence="1">
    <location>
        <position position="338"/>
    </location>
</feature>
<feature type="disulfide bond" description="Alternate" evidence="1">
    <location>
        <begin position="103"/>
        <end position="199"/>
    </location>
</feature>
<proteinExistence type="inferred from homology"/>
<sequence>MKKKVLVGMSGGVDSSVAAYLLKQQGYDVIGATMQIWQHDEEFEEREGGCCSLSAVDDARRVCDKLDIPFYVLNFRDYFKEKVIDKFVQEYIDGKTPNPCIECNKHLKFDELLRRARGIGADYVATGHYAKIEKRDDRYLLIRSDDDRKDQTYALYNFTQDQLEHTLMPCGDYEKTKIREIAKEIGLAVHNKKDSEEICFISDNNHGKYISEAEPNRVKPGNFVDKSGNILGKHKGIVYYTIGQRKGLGLSLGRPVFVTNINAKTNEVVLGSEDDIFKTELIATDVNFIPFDKLEKEIEVTAKIRYSARPAEATLIPLPNGRVKVIFKEKQRAITKGQSVVFYDDEIVVGGGIIESII</sequence>
<gene>
    <name evidence="1" type="primary">mnmA</name>
    <name type="ordered locus">Cbei_1100</name>
</gene>
<evidence type="ECO:0000255" key="1">
    <source>
        <dbReference type="HAMAP-Rule" id="MF_00144"/>
    </source>
</evidence>
<keyword id="KW-0067">ATP-binding</keyword>
<keyword id="KW-0963">Cytoplasm</keyword>
<keyword id="KW-1015">Disulfide bond</keyword>
<keyword id="KW-0547">Nucleotide-binding</keyword>
<keyword id="KW-0694">RNA-binding</keyword>
<keyword id="KW-0808">Transferase</keyword>
<keyword id="KW-0819">tRNA processing</keyword>
<keyword id="KW-0820">tRNA-binding</keyword>
<organism>
    <name type="scientific">Clostridium beijerinckii (strain ATCC 51743 / NCIMB 8052)</name>
    <name type="common">Clostridium acetobutylicum</name>
    <dbReference type="NCBI Taxonomy" id="290402"/>
    <lineage>
        <taxon>Bacteria</taxon>
        <taxon>Bacillati</taxon>
        <taxon>Bacillota</taxon>
        <taxon>Clostridia</taxon>
        <taxon>Eubacteriales</taxon>
        <taxon>Clostridiaceae</taxon>
        <taxon>Clostridium</taxon>
    </lineage>
</organism>
<accession>A6LSF2</accession>